<proteinExistence type="inferred from homology"/>
<protein>
    <recommendedName>
        <fullName>Transcriptional regulator MraZ</fullName>
    </recommendedName>
</protein>
<name>MRAZ_COREF</name>
<evidence type="ECO:0000255" key="1">
    <source>
        <dbReference type="HAMAP-Rule" id="MF_01008"/>
    </source>
</evidence>
<evidence type="ECO:0000255" key="2">
    <source>
        <dbReference type="PROSITE-ProRule" id="PRU01076"/>
    </source>
</evidence>
<evidence type="ECO:0000305" key="3"/>
<sequence length="143" mass="15638">MFLGTYTPKLDDKGRLTLPAKFRDELTGGLVVTKGQDHSLAVYPKEEFAARARKAAAVSRTSPEARAFIRNLAASADEQRPDAQGRITLSVGHRSYAGLTRECVVIGSVDFLEIWDAQAWATYQEETEAAFAAAEDDVLDGFL</sequence>
<comment type="subunit">
    <text evidence="1">Forms oligomers.</text>
</comment>
<comment type="subcellular location">
    <subcellularLocation>
        <location evidence="1">Cytoplasm</location>
        <location evidence="1">Nucleoid</location>
    </subcellularLocation>
</comment>
<comment type="similarity">
    <text evidence="1">Belongs to the MraZ family.</text>
</comment>
<comment type="sequence caution" evidence="3">
    <conflict type="erroneous initiation">
        <sequence resource="EMBL-CDS" id="BAC18872"/>
    </conflict>
</comment>
<organism>
    <name type="scientific">Corynebacterium efficiens (strain DSM 44549 / YS-314 / AJ 12310 / JCM 11189 / NBRC 100395)</name>
    <dbReference type="NCBI Taxonomy" id="196164"/>
    <lineage>
        <taxon>Bacteria</taxon>
        <taxon>Bacillati</taxon>
        <taxon>Actinomycetota</taxon>
        <taxon>Actinomycetes</taxon>
        <taxon>Mycobacteriales</taxon>
        <taxon>Corynebacteriaceae</taxon>
        <taxon>Corynebacterium</taxon>
    </lineage>
</organism>
<keyword id="KW-0963">Cytoplasm</keyword>
<keyword id="KW-0238">DNA-binding</keyword>
<keyword id="KW-1185">Reference proteome</keyword>
<keyword id="KW-0677">Repeat</keyword>
<keyword id="KW-0804">Transcription</keyword>
<keyword id="KW-0805">Transcription regulation</keyword>
<feature type="chain" id="PRO_0000108473" description="Transcriptional regulator MraZ">
    <location>
        <begin position="1"/>
        <end position="143"/>
    </location>
</feature>
<feature type="domain" description="SpoVT-AbrB 1" evidence="2">
    <location>
        <begin position="5"/>
        <end position="47"/>
    </location>
</feature>
<feature type="domain" description="SpoVT-AbrB 2" evidence="2">
    <location>
        <begin position="76"/>
        <end position="119"/>
    </location>
</feature>
<gene>
    <name evidence="1" type="primary">mraZ</name>
    <name type="ordered locus">CE2062</name>
</gene>
<reference key="1">
    <citation type="journal article" date="2003" name="Genome Res.">
        <title>Comparative complete genome sequence analysis of the amino acid replacements responsible for the thermostability of Corynebacterium efficiens.</title>
        <authorList>
            <person name="Nishio Y."/>
            <person name="Nakamura Y."/>
            <person name="Kawarabayasi Y."/>
            <person name="Usuda Y."/>
            <person name="Kimura E."/>
            <person name="Sugimoto S."/>
            <person name="Matsui K."/>
            <person name="Yamagishi A."/>
            <person name="Kikuchi H."/>
            <person name="Ikeo K."/>
            <person name="Gojobori T."/>
        </authorList>
    </citation>
    <scope>NUCLEOTIDE SEQUENCE [LARGE SCALE GENOMIC DNA]</scope>
    <source>
        <strain>DSM 44549 / YS-314 / AJ 12310 / JCM 11189 / NBRC 100395</strain>
    </source>
</reference>
<dbReference type="EMBL" id="BA000035">
    <property type="protein sequence ID" value="BAC18872.1"/>
    <property type="status" value="ALT_INIT"/>
    <property type="molecule type" value="Genomic_DNA"/>
</dbReference>
<dbReference type="RefSeq" id="WP_035108956.1">
    <property type="nucleotide sequence ID" value="NC_004369.1"/>
</dbReference>
<dbReference type="SMR" id="Q8FNT1"/>
<dbReference type="STRING" id="196164.gene:10742490"/>
<dbReference type="KEGG" id="cef:CE2062"/>
<dbReference type="eggNOG" id="COG2001">
    <property type="taxonomic scope" value="Bacteria"/>
</dbReference>
<dbReference type="HOGENOM" id="CLU_107907_0_5_11"/>
<dbReference type="OrthoDB" id="9807753at2"/>
<dbReference type="Proteomes" id="UP000001409">
    <property type="component" value="Chromosome"/>
</dbReference>
<dbReference type="GO" id="GO:0005737">
    <property type="term" value="C:cytoplasm"/>
    <property type="evidence" value="ECO:0007669"/>
    <property type="project" value="UniProtKB-UniRule"/>
</dbReference>
<dbReference type="GO" id="GO:0009295">
    <property type="term" value="C:nucleoid"/>
    <property type="evidence" value="ECO:0007669"/>
    <property type="project" value="UniProtKB-SubCell"/>
</dbReference>
<dbReference type="GO" id="GO:0003700">
    <property type="term" value="F:DNA-binding transcription factor activity"/>
    <property type="evidence" value="ECO:0007669"/>
    <property type="project" value="UniProtKB-UniRule"/>
</dbReference>
<dbReference type="GO" id="GO:0000976">
    <property type="term" value="F:transcription cis-regulatory region binding"/>
    <property type="evidence" value="ECO:0007669"/>
    <property type="project" value="TreeGrafter"/>
</dbReference>
<dbReference type="GO" id="GO:2000143">
    <property type="term" value="P:negative regulation of DNA-templated transcription initiation"/>
    <property type="evidence" value="ECO:0007669"/>
    <property type="project" value="TreeGrafter"/>
</dbReference>
<dbReference type="CDD" id="cd16321">
    <property type="entry name" value="MraZ_C"/>
    <property type="match status" value="1"/>
</dbReference>
<dbReference type="CDD" id="cd16320">
    <property type="entry name" value="MraZ_N"/>
    <property type="match status" value="1"/>
</dbReference>
<dbReference type="Gene3D" id="3.40.1550.20">
    <property type="entry name" value="Transcriptional regulator MraZ domain"/>
    <property type="match status" value="1"/>
</dbReference>
<dbReference type="HAMAP" id="MF_01008">
    <property type="entry name" value="MraZ"/>
    <property type="match status" value="1"/>
</dbReference>
<dbReference type="InterPro" id="IPR003444">
    <property type="entry name" value="MraZ"/>
</dbReference>
<dbReference type="InterPro" id="IPR035644">
    <property type="entry name" value="MraZ_C"/>
</dbReference>
<dbReference type="InterPro" id="IPR020603">
    <property type="entry name" value="MraZ_dom"/>
</dbReference>
<dbReference type="InterPro" id="IPR035642">
    <property type="entry name" value="MraZ_N"/>
</dbReference>
<dbReference type="InterPro" id="IPR038619">
    <property type="entry name" value="MraZ_sf"/>
</dbReference>
<dbReference type="InterPro" id="IPR007159">
    <property type="entry name" value="SpoVT-AbrB_dom"/>
</dbReference>
<dbReference type="InterPro" id="IPR037914">
    <property type="entry name" value="SpoVT-AbrB_sf"/>
</dbReference>
<dbReference type="NCBIfam" id="TIGR00242">
    <property type="entry name" value="division/cell wall cluster transcriptional repressor MraZ"/>
    <property type="match status" value="1"/>
</dbReference>
<dbReference type="PANTHER" id="PTHR34701">
    <property type="entry name" value="TRANSCRIPTIONAL REGULATOR MRAZ"/>
    <property type="match status" value="1"/>
</dbReference>
<dbReference type="PANTHER" id="PTHR34701:SF1">
    <property type="entry name" value="TRANSCRIPTIONAL REGULATOR MRAZ"/>
    <property type="match status" value="1"/>
</dbReference>
<dbReference type="Pfam" id="PF02381">
    <property type="entry name" value="MraZ"/>
    <property type="match status" value="2"/>
</dbReference>
<dbReference type="SUPFAM" id="SSF89447">
    <property type="entry name" value="AbrB/MazE/MraZ-like"/>
    <property type="match status" value="1"/>
</dbReference>
<dbReference type="PROSITE" id="PS51740">
    <property type="entry name" value="SPOVT_ABRB"/>
    <property type="match status" value="2"/>
</dbReference>
<accession>Q8FNT1</accession>